<keyword id="KW-0067">ATP-binding</keyword>
<keyword id="KW-0997">Cell inner membrane</keyword>
<keyword id="KW-1003">Cell membrane</keyword>
<keyword id="KW-0418">Kinase</keyword>
<keyword id="KW-0472">Membrane</keyword>
<keyword id="KW-0547">Nucleotide-binding</keyword>
<keyword id="KW-0597">Phosphoprotein</keyword>
<keyword id="KW-1185">Reference proteome</keyword>
<keyword id="KW-0808">Transferase</keyword>
<keyword id="KW-0812">Transmembrane</keyword>
<keyword id="KW-1133">Transmembrane helix</keyword>
<keyword id="KW-0902">Two-component regulatory system</keyword>
<name>GTRS_PSEAE</name>
<dbReference type="EC" id="2.7.13.3" evidence="5"/>
<dbReference type="EMBL" id="AE004091">
    <property type="protein sequence ID" value="AAG06579.1"/>
    <property type="molecule type" value="Genomic_DNA"/>
</dbReference>
<dbReference type="PIR" id="D83246">
    <property type="entry name" value="D83246"/>
</dbReference>
<dbReference type="RefSeq" id="NP_251881.1">
    <property type="nucleotide sequence ID" value="NC_002516.2"/>
</dbReference>
<dbReference type="RefSeq" id="WP_003114839.1">
    <property type="nucleotide sequence ID" value="NZ_QZGE01000019.1"/>
</dbReference>
<dbReference type="SMR" id="Q9HZ47"/>
<dbReference type="STRING" id="208964.PA3191"/>
<dbReference type="PaxDb" id="208964-PA3191"/>
<dbReference type="GeneID" id="882906"/>
<dbReference type="KEGG" id="pae:PA3191"/>
<dbReference type="PATRIC" id="fig|208964.12.peg.3337"/>
<dbReference type="PseudoCAP" id="PA3191"/>
<dbReference type="HOGENOM" id="CLU_000445_89_27_6"/>
<dbReference type="InParanoid" id="Q9HZ47"/>
<dbReference type="OrthoDB" id="9804645at2"/>
<dbReference type="PhylomeDB" id="Q9HZ47"/>
<dbReference type="BioCyc" id="PAER208964:G1FZ6-3251-MONOMER"/>
<dbReference type="Proteomes" id="UP000002438">
    <property type="component" value="Chromosome"/>
</dbReference>
<dbReference type="GO" id="GO:0005886">
    <property type="term" value="C:plasma membrane"/>
    <property type="evidence" value="ECO:0000318"/>
    <property type="project" value="GO_Central"/>
</dbReference>
<dbReference type="GO" id="GO:0005524">
    <property type="term" value="F:ATP binding"/>
    <property type="evidence" value="ECO:0007669"/>
    <property type="project" value="UniProtKB-KW"/>
</dbReference>
<dbReference type="GO" id="GO:0000155">
    <property type="term" value="F:phosphorelay sensor kinase activity"/>
    <property type="evidence" value="ECO:0000318"/>
    <property type="project" value="GO_Central"/>
</dbReference>
<dbReference type="CDD" id="cd06225">
    <property type="entry name" value="HAMP"/>
    <property type="match status" value="1"/>
</dbReference>
<dbReference type="CDD" id="cd00075">
    <property type="entry name" value="HATPase"/>
    <property type="match status" value="1"/>
</dbReference>
<dbReference type="CDD" id="cd00082">
    <property type="entry name" value="HisKA"/>
    <property type="match status" value="1"/>
</dbReference>
<dbReference type="Gene3D" id="1.10.287.130">
    <property type="match status" value="1"/>
</dbReference>
<dbReference type="Gene3D" id="1.10.8.500">
    <property type="entry name" value="HAMP domain in histidine kinase"/>
    <property type="match status" value="1"/>
</dbReference>
<dbReference type="Gene3D" id="3.30.565.10">
    <property type="entry name" value="Histidine kinase-like ATPase, C-terminal domain"/>
    <property type="match status" value="1"/>
</dbReference>
<dbReference type="InterPro" id="IPR050980">
    <property type="entry name" value="2C_sensor_his_kinase"/>
</dbReference>
<dbReference type="InterPro" id="IPR003660">
    <property type="entry name" value="HAMP_dom"/>
</dbReference>
<dbReference type="InterPro" id="IPR036890">
    <property type="entry name" value="HATPase_C_sf"/>
</dbReference>
<dbReference type="InterPro" id="IPR005467">
    <property type="entry name" value="His_kinase_dom"/>
</dbReference>
<dbReference type="InterPro" id="IPR003661">
    <property type="entry name" value="HisK_dim/P_dom"/>
</dbReference>
<dbReference type="InterPro" id="IPR036097">
    <property type="entry name" value="HisK_dim/P_sf"/>
</dbReference>
<dbReference type="InterPro" id="IPR004358">
    <property type="entry name" value="Sig_transdc_His_kin-like_C"/>
</dbReference>
<dbReference type="PANTHER" id="PTHR44936:SF5">
    <property type="entry name" value="SENSOR HISTIDINE KINASE ENVZ"/>
    <property type="match status" value="1"/>
</dbReference>
<dbReference type="PANTHER" id="PTHR44936">
    <property type="entry name" value="SENSOR PROTEIN CREC"/>
    <property type="match status" value="1"/>
</dbReference>
<dbReference type="Pfam" id="PF00672">
    <property type="entry name" value="HAMP"/>
    <property type="match status" value="1"/>
</dbReference>
<dbReference type="Pfam" id="PF02518">
    <property type="entry name" value="HATPase_c"/>
    <property type="match status" value="1"/>
</dbReference>
<dbReference type="Pfam" id="PF00512">
    <property type="entry name" value="HisKA"/>
    <property type="match status" value="1"/>
</dbReference>
<dbReference type="PRINTS" id="PR00344">
    <property type="entry name" value="BCTRLSENSOR"/>
</dbReference>
<dbReference type="SMART" id="SM00304">
    <property type="entry name" value="HAMP"/>
    <property type="match status" value="1"/>
</dbReference>
<dbReference type="SMART" id="SM00387">
    <property type="entry name" value="HATPase_c"/>
    <property type="match status" value="1"/>
</dbReference>
<dbReference type="SMART" id="SM00388">
    <property type="entry name" value="HisKA"/>
    <property type="match status" value="1"/>
</dbReference>
<dbReference type="SUPFAM" id="SSF55874">
    <property type="entry name" value="ATPase domain of HSP90 chaperone/DNA topoisomerase II/histidine kinase"/>
    <property type="match status" value="1"/>
</dbReference>
<dbReference type="SUPFAM" id="SSF158472">
    <property type="entry name" value="HAMP domain-like"/>
    <property type="match status" value="1"/>
</dbReference>
<dbReference type="SUPFAM" id="SSF47384">
    <property type="entry name" value="Homodimeric domain of signal transducing histidine kinase"/>
    <property type="match status" value="1"/>
</dbReference>
<dbReference type="PROSITE" id="PS50885">
    <property type="entry name" value="HAMP"/>
    <property type="match status" value="1"/>
</dbReference>
<dbReference type="PROSITE" id="PS50109">
    <property type="entry name" value="HIS_KIN"/>
    <property type="match status" value="1"/>
</dbReference>
<reference key="1">
    <citation type="journal article" date="2000" name="Nature">
        <title>Complete genome sequence of Pseudomonas aeruginosa PAO1, an opportunistic pathogen.</title>
        <authorList>
            <person name="Stover C.K."/>
            <person name="Pham X.-Q.T."/>
            <person name="Erwin A.L."/>
            <person name="Mizoguchi S.D."/>
            <person name="Warrener P."/>
            <person name="Hickey M.J."/>
            <person name="Brinkman F.S.L."/>
            <person name="Hufnagle W.O."/>
            <person name="Kowalik D.J."/>
            <person name="Lagrou M."/>
            <person name="Garber R.L."/>
            <person name="Goltry L."/>
            <person name="Tolentino E."/>
            <person name="Westbrock-Wadman S."/>
            <person name="Yuan Y."/>
            <person name="Brody L.L."/>
            <person name="Coulter S.N."/>
            <person name="Folger K.R."/>
            <person name="Kas A."/>
            <person name="Larbig K."/>
            <person name="Lim R.M."/>
            <person name="Smith K.A."/>
            <person name="Spencer D.H."/>
            <person name="Wong G.K.-S."/>
            <person name="Wu Z."/>
            <person name="Paulsen I.T."/>
            <person name="Reizer J."/>
            <person name="Saier M.H. Jr."/>
            <person name="Hancock R.E.W."/>
            <person name="Lory S."/>
            <person name="Olson M.V."/>
        </authorList>
    </citation>
    <scope>NUCLEOTIDE SEQUENCE [LARGE SCALE GENOMIC DNA]</scope>
    <source>
        <strain>ATCC 15692 / DSM 22644 / CIP 104116 / JCM 14847 / LMG 12228 / 1C / PRS 101 / PAO1</strain>
    </source>
</reference>
<reference key="2">
    <citation type="journal article" date="2012" name="Microbiology">
        <title>A novel host-responsive sensor mediates virulence and type III secretion during Pseudomonas aeruginosa-host cell interactions.</title>
        <authorList>
            <person name="O'Callaghan J."/>
            <person name="Reen F.J."/>
            <person name="Adams C."/>
            <person name="Casey P.G."/>
            <person name="Gahan C.G.M."/>
            <person name="O'Gara F."/>
        </authorList>
    </citation>
    <scope>FUNCTION</scope>
    <scope>INDUCTION</scope>
    <scope>DISRUPTION PHENOTYPE</scope>
    <source>
        <strain>ATCC 15692 / DSM 22644 / CIP 104116 / JCM 14847 / LMG 12228 / 1C / PRS 101 / PAO1</strain>
    </source>
</reference>
<reference key="3">
    <citation type="journal article" date="2014" name="Nucleic Acids Res.">
        <title>GtrS and GltR form a two-component system: the central role of 2-ketogluconate in the expression of exotoxin A and glucose catabolic enzymes in Pseudomonas aeruginosa.</title>
        <authorList>
            <person name="Daddaoua A."/>
            <person name="Molina-Santiago C."/>
            <person name="de la Torre J."/>
            <person name="Krell T."/>
            <person name="Ramos J.L."/>
        </authorList>
    </citation>
    <scope>FUNCTION</scope>
    <scope>CATALYTIC ACTIVITY</scope>
    <scope>AUTOPHOSPHORYLATION</scope>
    <source>
        <strain>ATCC 15692 / DSM 22644 / CIP 104116 / JCM 14847 / LMG 12228 / 1C / PRS 101 / PAO1</strain>
    </source>
</reference>
<gene>
    <name evidence="6" type="primary">gtrS</name>
    <name evidence="9" type="ordered locus">PA3191</name>
</gene>
<sequence>MPRSLLGRMLLLTLLAVLVAQGLSSLFWLSHLRSSQREGLLTSSRSLAYSMAASVSYFRSLPLGYRPLVLDQLRSMGGTRFFVSLNDRPLEMRALPDTPNKQAVLEIVQDVLHQRLGKEVELQVEFVSPDELRLFNGALKLDELPRSWAHYALTLEPVNPPVLVTQIRIGESEWLYIASLMPAPYVSLEPEGLQPQQVLSIVFTSLLLLLFTGLLMHWQSRPLKRLARAARDLALGSPSAALEERGASELVEVARAFNTMHERIDRYLNERGQLFSAISHDLRTPITRLRLRVELLEDERLQEKFGRDLDELELLVKGALQCVKDTDIHENVESVDLNLLLQHIAEPYLADGRVEVVGRAAEPYPGKPLALKRCIGNLLDNALKYGERARLSLEDGPEAVVLHVDDDGPGVPEQRLEQIFEPRFRLSPRGQGYGLGLGIARNIAHTHGGEVSLQNRREGGLRVSLRLPRLGLE</sequence>
<accession>Q9HZ47</accession>
<proteinExistence type="evidence at protein level"/>
<feature type="chain" id="PRO_0000454756" description="Sensor histidine kinase GtrS">
    <location>
        <begin position="1"/>
        <end position="473"/>
    </location>
</feature>
<feature type="topological domain" description="Cytoplasmic" evidence="8">
    <location>
        <begin position="1"/>
        <end position="8"/>
    </location>
</feature>
<feature type="transmembrane region" description="Helical" evidence="1">
    <location>
        <begin position="9"/>
        <end position="29"/>
    </location>
</feature>
<feature type="topological domain" description="Periplasmic" evidence="8">
    <location>
        <begin position="30"/>
        <end position="197"/>
    </location>
</feature>
<feature type="transmembrane region" description="Helical" evidence="1">
    <location>
        <begin position="198"/>
        <end position="218"/>
    </location>
</feature>
<feature type="topological domain" description="Cytoplasmic" evidence="8">
    <location>
        <begin position="219"/>
        <end position="473"/>
    </location>
</feature>
<feature type="domain" description="HAMP" evidence="2">
    <location>
        <begin position="217"/>
        <end position="269"/>
    </location>
</feature>
<feature type="domain" description="Histidine kinase" evidence="3">
    <location>
        <begin position="277"/>
        <end position="471"/>
    </location>
</feature>
<feature type="modified residue" description="Phosphohistidine; by autocatalysis" evidence="3">
    <location>
        <position position="280"/>
    </location>
</feature>
<evidence type="ECO:0000255" key="1"/>
<evidence type="ECO:0000255" key="2">
    <source>
        <dbReference type="PROSITE-ProRule" id="PRU00102"/>
    </source>
</evidence>
<evidence type="ECO:0000255" key="3">
    <source>
        <dbReference type="PROSITE-ProRule" id="PRU00107"/>
    </source>
</evidence>
<evidence type="ECO:0000269" key="4">
    <source>
    </source>
</evidence>
<evidence type="ECO:0000269" key="5">
    <source>
    </source>
</evidence>
<evidence type="ECO:0000303" key="6">
    <source>
    </source>
</evidence>
<evidence type="ECO:0000305" key="7"/>
<evidence type="ECO:0000305" key="8">
    <source>
    </source>
</evidence>
<evidence type="ECO:0000312" key="9">
    <source>
        <dbReference type="EMBL" id="AAG06579.1"/>
    </source>
</evidence>
<comment type="function">
    <text evidence="5">Member of the two-component regulatory system GtrS/GltR involved in the regulation of glucose metabolism and transport, as well as regulation of the exotoxin A gene expression (PubMed:24920832). GtrS recognizes and binds 2-ketogluconate and 6-phosphogluconate via its sensor domain, which accelerates GtrS autophosphorylation and concomitant transphosphorylation and regulation of the response regulator GltR (PubMed:24920832).</text>
</comment>
<comment type="function">
    <text evidence="4">Plays a key role during bacteria-host interactions and is required for optimal colonization and dissemination in a mouse model of infection (PubMed:22262100). Contributes to modulation of the type III secretion system (T3SS) in response to host cells via the regulation of the OprB transport system (PubMed:22262100).</text>
</comment>
<comment type="catalytic activity">
    <reaction evidence="5">
        <text>ATP + protein L-histidine = ADP + protein N-phospho-L-histidine.</text>
        <dbReference type="EC" id="2.7.13.3"/>
    </reaction>
</comment>
<comment type="subcellular location">
    <subcellularLocation>
        <location evidence="8">Cell inner membrane</location>
        <topology evidence="1">Multi-pass membrane protein</topology>
    </subcellularLocation>
</comment>
<comment type="induction">
    <text evidence="4">Induced during infection of airway epithelial cells.</text>
</comment>
<comment type="PTM">
    <text evidence="5">Autophosphorylated.</text>
</comment>
<comment type="disruption phenotype">
    <text evidence="4">Inactivation of the gene results in elevated ingestion and reduced cytotoxicity of eukaryotic cells during P.aeruginosa infection.</text>
</comment>
<protein>
    <recommendedName>
        <fullName evidence="7">Sensor histidine kinase GtrS</fullName>
        <ecNumber evidence="5">2.7.13.3</ecNumber>
    </recommendedName>
    <alternativeName>
        <fullName evidence="6">Glucose transport sensor</fullName>
    </alternativeName>
</protein>
<organism>
    <name type="scientific">Pseudomonas aeruginosa (strain ATCC 15692 / DSM 22644 / CIP 104116 / JCM 14847 / LMG 12228 / 1C / PRS 101 / PAO1)</name>
    <dbReference type="NCBI Taxonomy" id="208964"/>
    <lineage>
        <taxon>Bacteria</taxon>
        <taxon>Pseudomonadati</taxon>
        <taxon>Pseudomonadota</taxon>
        <taxon>Gammaproteobacteria</taxon>
        <taxon>Pseudomonadales</taxon>
        <taxon>Pseudomonadaceae</taxon>
        <taxon>Pseudomonas</taxon>
    </lineage>
</organism>